<accession>Q00323</accession>
<gene>
    <name type="ORF">V1</name>
</gene>
<organismHost>
    <name type="scientific">Megathyrsus maximus</name>
    <dbReference type="NCBI Taxonomy" id="59788"/>
</organismHost>
<reference key="1">
    <citation type="journal article" date="1992" name="J. Gen. Virol.">
        <title>The nucleotide sequence of an infectious insect-transmissible clone of the geminivirus Panicum streak virus.</title>
        <authorList>
            <person name="Briddon R.W."/>
            <person name="Lunness P."/>
            <person name="Chamberlain L.C."/>
            <person name="Brundish H."/>
            <person name="Pinner M.S."/>
            <person name="Markham P.G."/>
        </authorList>
    </citation>
    <scope>NUCLEOTIDE SEQUENCE [GENOMIC DNA]</scope>
</reference>
<protein>
    <recommendedName>
        <fullName>Capsid protein</fullName>
    </recommendedName>
    <alternativeName>
        <fullName>Coat protein</fullName>
        <shortName>CP</shortName>
    </alternativeName>
</protein>
<name>CAPSD_PASVK</name>
<sequence>MSGALKRKRSDEVAWSRRRPVKKPVRRAPPPRAGPSVRRGLPSLQIQTLVAAGDTMITVPSGGICSLIGTYARGSGEGERHTNETLTYKVALDYHFVATAAACKYSSIGIGVCWLVYDAQPTGTAPTVQDIFPHPATLSAFPYTWKVGREVCHRFVVKRRWCFTMETNGRIGSDTPPSNVAWPPCKKDIYFHKFCTGLGVKTEWKNVTDGKDGAIKKGGFYIVIAPGNVEFTCHGQCRLYFKSVGNQ</sequence>
<keyword id="KW-0167">Capsid protein</keyword>
<keyword id="KW-0238">DNA-binding</keyword>
<keyword id="KW-1048">Host nucleus</keyword>
<keyword id="KW-1185">Reference proteome</keyword>
<keyword id="KW-1140">T=1 icosahedral capsid protein</keyword>
<keyword id="KW-1163">Viral penetration into host nucleus</keyword>
<keyword id="KW-0946">Virion</keyword>
<keyword id="KW-1160">Virus entry into host cell</keyword>
<evidence type="ECO:0000250" key="1"/>
<evidence type="ECO:0000256" key="2">
    <source>
        <dbReference type="SAM" id="MobiDB-lite"/>
    </source>
</evidence>
<evidence type="ECO:0000305" key="3"/>
<proteinExistence type="inferred from homology"/>
<dbReference type="EMBL" id="X60168">
    <property type="protein sequence ID" value="CAA42734.1"/>
    <property type="molecule type" value="Genomic_DNA"/>
</dbReference>
<dbReference type="PIR" id="JQ1550">
    <property type="entry name" value="JQ1550"/>
</dbReference>
<dbReference type="SMR" id="Q00323"/>
<dbReference type="Proteomes" id="UP000007896">
    <property type="component" value="Genome"/>
</dbReference>
<dbReference type="GO" id="GO:0043657">
    <property type="term" value="C:host cell"/>
    <property type="evidence" value="ECO:0007669"/>
    <property type="project" value="GOC"/>
</dbReference>
<dbReference type="GO" id="GO:0042025">
    <property type="term" value="C:host cell nucleus"/>
    <property type="evidence" value="ECO:0007669"/>
    <property type="project" value="UniProtKB-SubCell"/>
</dbReference>
<dbReference type="GO" id="GO:0039615">
    <property type="term" value="C:T=1 icosahedral viral capsid"/>
    <property type="evidence" value="ECO:0007669"/>
    <property type="project" value="UniProtKB-KW"/>
</dbReference>
<dbReference type="GO" id="GO:0003677">
    <property type="term" value="F:DNA binding"/>
    <property type="evidence" value="ECO:0007669"/>
    <property type="project" value="UniProtKB-KW"/>
</dbReference>
<dbReference type="GO" id="GO:0005198">
    <property type="term" value="F:structural molecule activity"/>
    <property type="evidence" value="ECO:0007669"/>
    <property type="project" value="InterPro"/>
</dbReference>
<dbReference type="GO" id="GO:0046718">
    <property type="term" value="P:symbiont entry into host cell"/>
    <property type="evidence" value="ECO:0007669"/>
    <property type="project" value="UniProtKB-KW"/>
</dbReference>
<dbReference type="GO" id="GO:0075732">
    <property type="term" value="P:viral penetration into host nucleus"/>
    <property type="evidence" value="ECO:0007669"/>
    <property type="project" value="UniProtKB-KW"/>
</dbReference>
<dbReference type="Gene3D" id="2.60.120.20">
    <property type="match status" value="1"/>
</dbReference>
<dbReference type="InterPro" id="IPR000143">
    <property type="entry name" value="Gemcoat_MSV"/>
</dbReference>
<dbReference type="InterPro" id="IPR000263">
    <property type="entry name" value="GV_A/BR1_coat"/>
</dbReference>
<dbReference type="InterPro" id="IPR029053">
    <property type="entry name" value="Viral_coat"/>
</dbReference>
<dbReference type="Pfam" id="PF00844">
    <property type="entry name" value="Gemini_coat"/>
    <property type="match status" value="1"/>
</dbReference>
<dbReference type="PRINTS" id="PR00223">
    <property type="entry name" value="GEMCOATARBR1"/>
</dbReference>
<dbReference type="PRINTS" id="PR00226">
    <property type="entry name" value="GEMCOATMSV"/>
</dbReference>
<comment type="function">
    <text evidence="1">Encapsidates the viral genome into characteristic twinned ('geminate') particles. Binds the genomic viral ssDNA and shuttles it into and out of the cell nucleus. Plays a role in protection of the genome from degradation, virus acquisition and transmission by insect vectors, infectivity, and systemic movement. The CP of monopartite geminiviruses is absolutely essential for virus movement (By similarity).</text>
</comment>
<comment type="subunit">
    <text evidence="1">Homomultimer. Interacts with the movement protein. Binds to single-stranded and double-stranded viral DNA (By similarity).</text>
</comment>
<comment type="subcellular location">
    <subcellularLocation>
        <location evidence="1">Virion</location>
    </subcellularLocation>
    <subcellularLocation>
        <location>Host nucleus</location>
    </subcellularLocation>
    <text evidence="1">It is actively transported into the host cell nucleus. It may be exported out of the nucleus through a nuclear export signal for cell-to-cell movement and spread (By similarity).</text>
</comment>
<comment type="similarity">
    <text evidence="3">Belongs to the geminiviridae capsid protein family.</text>
</comment>
<organism>
    <name type="scientific">Panicum streak virus (isolate Kenya)</name>
    <name type="common">PanSV</name>
    <dbReference type="NCBI Taxonomy" id="268780"/>
    <lineage>
        <taxon>Viruses</taxon>
        <taxon>Monodnaviria</taxon>
        <taxon>Shotokuvirae</taxon>
        <taxon>Cressdnaviricota</taxon>
        <taxon>Repensiviricetes</taxon>
        <taxon>Geplafuvirales</taxon>
        <taxon>Geminiviridae</taxon>
        <taxon>Mastrevirus</taxon>
        <taxon>Panicum streak virus</taxon>
    </lineage>
</organism>
<feature type="chain" id="PRO_0000222188" description="Capsid protein">
    <location>
        <begin position="1"/>
        <end position="247"/>
    </location>
</feature>
<feature type="region of interest" description="Disordered" evidence="2">
    <location>
        <begin position="1"/>
        <end position="39"/>
    </location>
</feature>
<feature type="short sequence motif" description="Bipartite nuclear localization signal" evidence="1">
    <location>
        <begin position="1"/>
        <end position="28"/>
    </location>
</feature>
<feature type="compositionally biased region" description="Basic residues" evidence="2">
    <location>
        <begin position="16"/>
        <end position="26"/>
    </location>
</feature>